<feature type="chain" id="PRO_0000318247" description="Protein-export protein SecB">
    <location>
        <begin position="1"/>
        <end position="157"/>
    </location>
</feature>
<protein>
    <recommendedName>
        <fullName evidence="1">Protein-export protein SecB</fullName>
    </recommendedName>
</protein>
<gene>
    <name evidence="1" type="primary">secB</name>
    <name type="ordered locus">Mfla_2185</name>
</gene>
<sequence length="157" mass="17233">MAEEQAAAQEQQPAFGIEKVYVKDLSLEIPHAPQIFIQREAPQVSIELSNATAQLEEGIYEVVVTVTVTSKIADKTVFLVEVAQAGIFQIRNVPQENIDIILGVTCPNIIFPYARETISDVVTRAGFPPVLLNPVNFEALYAQQKQEQAKANGATTH</sequence>
<reference key="1">
    <citation type="submission" date="2006-03" db="EMBL/GenBank/DDBJ databases">
        <title>Complete sequence of Methylobacillus flagellatus KT.</title>
        <authorList>
            <consortium name="US DOE Joint Genome Institute"/>
            <person name="Copeland A."/>
            <person name="Lucas S."/>
            <person name="Lapidus A."/>
            <person name="Barry K."/>
            <person name="Detter J.C."/>
            <person name="Glavina del Rio T."/>
            <person name="Hammon N."/>
            <person name="Israni S."/>
            <person name="Dalin E."/>
            <person name="Tice H."/>
            <person name="Pitluck S."/>
            <person name="Brettin T."/>
            <person name="Bruce D."/>
            <person name="Han C."/>
            <person name="Tapia R."/>
            <person name="Saunders E."/>
            <person name="Gilna P."/>
            <person name="Schmutz J."/>
            <person name="Larimer F."/>
            <person name="Land M."/>
            <person name="Kyrpides N."/>
            <person name="Anderson I."/>
            <person name="Richardson P."/>
        </authorList>
    </citation>
    <scope>NUCLEOTIDE SEQUENCE [LARGE SCALE GENOMIC DNA]</scope>
    <source>
        <strain>ATCC 51484 / DSM 6875 / VKM B-1610 / KT</strain>
    </source>
</reference>
<evidence type="ECO:0000255" key="1">
    <source>
        <dbReference type="HAMAP-Rule" id="MF_00821"/>
    </source>
</evidence>
<keyword id="KW-0143">Chaperone</keyword>
<keyword id="KW-0963">Cytoplasm</keyword>
<keyword id="KW-0653">Protein transport</keyword>
<keyword id="KW-1185">Reference proteome</keyword>
<keyword id="KW-0811">Translocation</keyword>
<keyword id="KW-0813">Transport</keyword>
<proteinExistence type="inferred from homology"/>
<name>SECB_METFK</name>
<dbReference type="EMBL" id="CP000284">
    <property type="protein sequence ID" value="ABE50452.1"/>
    <property type="molecule type" value="Genomic_DNA"/>
</dbReference>
<dbReference type="RefSeq" id="WP_011480406.1">
    <property type="nucleotide sequence ID" value="NC_007947.1"/>
</dbReference>
<dbReference type="SMR" id="Q1GZ85"/>
<dbReference type="STRING" id="265072.Mfla_2185"/>
<dbReference type="KEGG" id="mfa:Mfla_2185"/>
<dbReference type="eggNOG" id="COG1952">
    <property type="taxonomic scope" value="Bacteria"/>
</dbReference>
<dbReference type="HOGENOM" id="CLU_111574_1_0_4"/>
<dbReference type="OrthoDB" id="9795145at2"/>
<dbReference type="Proteomes" id="UP000002440">
    <property type="component" value="Chromosome"/>
</dbReference>
<dbReference type="GO" id="GO:0005737">
    <property type="term" value="C:cytoplasm"/>
    <property type="evidence" value="ECO:0007669"/>
    <property type="project" value="UniProtKB-SubCell"/>
</dbReference>
<dbReference type="GO" id="GO:0051082">
    <property type="term" value="F:unfolded protein binding"/>
    <property type="evidence" value="ECO:0007669"/>
    <property type="project" value="InterPro"/>
</dbReference>
<dbReference type="GO" id="GO:0006457">
    <property type="term" value="P:protein folding"/>
    <property type="evidence" value="ECO:0007669"/>
    <property type="project" value="UniProtKB-UniRule"/>
</dbReference>
<dbReference type="GO" id="GO:0051262">
    <property type="term" value="P:protein tetramerization"/>
    <property type="evidence" value="ECO:0007669"/>
    <property type="project" value="InterPro"/>
</dbReference>
<dbReference type="GO" id="GO:0015031">
    <property type="term" value="P:protein transport"/>
    <property type="evidence" value="ECO:0007669"/>
    <property type="project" value="UniProtKB-UniRule"/>
</dbReference>
<dbReference type="Gene3D" id="3.10.420.10">
    <property type="entry name" value="SecB-like"/>
    <property type="match status" value="1"/>
</dbReference>
<dbReference type="HAMAP" id="MF_00821">
    <property type="entry name" value="SecB"/>
    <property type="match status" value="1"/>
</dbReference>
<dbReference type="InterPro" id="IPR003708">
    <property type="entry name" value="SecB"/>
</dbReference>
<dbReference type="InterPro" id="IPR035958">
    <property type="entry name" value="SecB-like_sf"/>
</dbReference>
<dbReference type="NCBIfam" id="NF004392">
    <property type="entry name" value="PRK05751.1-3"/>
    <property type="match status" value="1"/>
</dbReference>
<dbReference type="NCBIfam" id="NF004393">
    <property type="entry name" value="PRK05751.1-4"/>
    <property type="match status" value="1"/>
</dbReference>
<dbReference type="NCBIfam" id="NF004394">
    <property type="entry name" value="PRK05751.1-5"/>
    <property type="match status" value="1"/>
</dbReference>
<dbReference type="NCBIfam" id="TIGR00809">
    <property type="entry name" value="secB"/>
    <property type="match status" value="1"/>
</dbReference>
<dbReference type="PANTHER" id="PTHR36918">
    <property type="match status" value="1"/>
</dbReference>
<dbReference type="PANTHER" id="PTHR36918:SF1">
    <property type="entry name" value="PROTEIN-EXPORT PROTEIN SECB"/>
    <property type="match status" value="1"/>
</dbReference>
<dbReference type="Pfam" id="PF02556">
    <property type="entry name" value="SecB"/>
    <property type="match status" value="1"/>
</dbReference>
<dbReference type="PRINTS" id="PR01594">
    <property type="entry name" value="SECBCHAPRONE"/>
</dbReference>
<dbReference type="SUPFAM" id="SSF54611">
    <property type="entry name" value="SecB-like"/>
    <property type="match status" value="1"/>
</dbReference>
<comment type="function">
    <text evidence="1">One of the proteins required for the normal export of preproteins out of the cell cytoplasm. It is a molecular chaperone that binds to a subset of precursor proteins, maintaining them in a translocation-competent state. It also specifically binds to its receptor SecA.</text>
</comment>
<comment type="subunit">
    <text evidence="1">Homotetramer, a dimer of dimers. One homotetramer interacts with 1 SecA dimer.</text>
</comment>
<comment type="subcellular location">
    <subcellularLocation>
        <location evidence="1">Cytoplasm</location>
    </subcellularLocation>
</comment>
<comment type="similarity">
    <text evidence="1">Belongs to the SecB family.</text>
</comment>
<accession>Q1GZ85</accession>
<organism>
    <name type="scientific">Methylobacillus flagellatus (strain ATCC 51484 / DSM 6875 / VKM B-1610 / KT)</name>
    <dbReference type="NCBI Taxonomy" id="265072"/>
    <lineage>
        <taxon>Bacteria</taxon>
        <taxon>Pseudomonadati</taxon>
        <taxon>Pseudomonadota</taxon>
        <taxon>Betaproteobacteria</taxon>
        <taxon>Nitrosomonadales</taxon>
        <taxon>Methylophilaceae</taxon>
        <taxon>Methylobacillus</taxon>
    </lineage>
</organism>